<reference key="1">
    <citation type="journal article" date="1998" name="Nature">
        <title>Deciphering the biology of Mycobacterium tuberculosis from the complete genome sequence.</title>
        <authorList>
            <person name="Cole S.T."/>
            <person name="Brosch R."/>
            <person name="Parkhill J."/>
            <person name="Garnier T."/>
            <person name="Churcher C.M."/>
            <person name="Harris D.E."/>
            <person name="Gordon S.V."/>
            <person name="Eiglmeier K."/>
            <person name="Gas S."/>
            <person name="Barry C.E. III"/>
            <person name="Tekaia F."/>
            <person name="Badcock K."/>
            <person name="Basham D."/>
            <person name="Brown D."/>
            <person name="Chillingworth T."/>
            <person name="Connor R."/>
            <person name="Davies R.M."/>
            <person name="Devlin K."/>
            <person name="Feltwell T."/>
            <person name="Gentles S."/>
            <person name="Hamlin N."/>
            <person name="Holroyd S."/>
            <person name="Hornsby T."/>
            <person name="Jagels K."/>
            <person name="Krogh A."/>
            <person name="McLean J."/>
            <person name="Moule S."/>
            <person name="Murphy L.D."/>
            <person name="Oliver S."/>
            <person name="Osborne J."/>
            <person name="Quail M.A."/>
            <person name="Rajandream M.A."/>
            <person name="Rogers J."/>
            <person name="Rutter S."/>
            <person name="Seeger K."/>
            <person name="Skelton S."/>
            <person name="Squares S."/>
            <person name="Squares R."/>
            <person name="Sulston J.E."/>
            <person name="Taylor K."/>
            <person name="Whitehead S."/>
            <person name="Barrell B.G."/>
        </authorList>
    </citation>
    <scope>NUCLEOTIDE SEQUENCE [LARGE SCALE GENOMIC DNA]</scope>
    <source>
        <strain>ATCC 25618 / H37Rv</strain>
    </source>
</reference>
<reference key="2">
    <citation type="journal article" date="2004" name="Proc. Natl. Acad. Sci. U.S.A.">
        <title>Mycobacterial polyketide-associated proteins are acyltransferases: proof of principle with Mycobacterium tuberculosis PapA5.</title>
        <authorList>
            <person name="Onwueme K.C."/>
            <person name="Ferreras J.A."/>
            <person name="Buglino J."/>
            <person name="Lima C.D."/>
            <person name="Quadri L.E.N."/>
        </authorList>
    </citation>
    <scope>FUNCTION AS AN ACYLTRANSFERASE</scope>
    <scope>ROLE IN PDIM SYNTHESIS</scope>
    <scope>CATALYTIC ACTIVITY</scope>
    <scope>SUBSTRATE SPECIFICITY</scope>
    <scope>BIOPHYSICOCHEMICAL PROPERTIES</scope>
    <scope>MUTAGENESIS OF HIS-123; HIS-124; ASP-128 AND TYR-143</scope>
    <source>
        <strain>ATCC 35801 / TMC 107 / Erdman</strain>
    </source>
</reference>
<reference key="3">
    <citation type="journal article" date="2004" name="Proc. Natl. Acad. Sci. U.S.A.">
        <authorList>
            <person name="Onwueme K.C."/>
            <person name="Ferreras J.A."/>
            <person name="Buglino J."/>
            <person name="Lima C.D."/>
            <person name="Quadri L.E.N."/>
        </authorList>
    </citation>
    <scope>ERRATUM OF PUBMED:15070765</scope>
</reference>
<reference key="4">
    <citation type="journal article" date="2005" name="Mol. Cell">
        <title>Dissecting the mechanism and assembly of a complex virulence mycobacterial lipid.</title>
        <authorList>
            <person name="Trivedi O.A."/>
            <person name="Arora P."/>
            <person name="Vats A."/>
            <person name="Ansari M.Z."/>
            <person name="Tickoo R."/>
            <person name="Sridharan V."/>
            <person name="Mohanty D."/>
            <person name="Gokhale R.S."/>
        </authorList>
    </citation>
    <scope>FUNCTION</scope>
    <scope>BIOPHYSICOCHEMICAL PROPERTIES</scope>
    <scope>INTERACTION WITH MAS PROTEIN</scope>
    <scope>MUTAGENESIS OF ARG-234 AND ARG-312</scope>
    <source>
        <strain>ATCC 25618 / H37Rv</strain>
    </source>
</reference>
<reference key="5">
    <citation type="journal article" date="2008" name="BMC Syst. Biol.">
        <title>targetTB: a target identification pipeline for Mycobacterium tuberculosis through an interactome, reactome and genome-scale structural analysis.</title>
        <authorList>
            <person name="Raman K."/>
            <person name="Yeturu K."/>
            <person name="Chandra N."/>
        </authorList>
    </citation>
    <scope>IDENTIFICATION AS A DRUG TARGET [LARGE SCALE ANALYSIS]</scope>
</reference>
<reference key="6">
    <citation type="journal article" date="2009" name="J. Biol. Chem.">
        <title>Forkhead-associated domain-containing protein Rv0019c and polyketide-associated protein PapA5, from substrates of serine/threonine protein kinase PknB to interacting proteins of Mycobacterium tuberculosis.</title>
        <authorList>
            <person name="Gupta M."/>
            <person name="Sajid A."/>
            <person name="Arora G."/>
            <person name="Tandon V."/>
            <person name="Singh Y."/>
        </authorList>
    </citation>
    <scope>INTERACTION WITH FHAB</scope>
    <scope>PHOSPHORYLATION</scope>
    <scope>DEPHOSPHORYLATION BY PSTP</scope>
</reference>
<reference key="7">
    <citation type="journal article" date="2011" name="Mol. Cell. Proteomics">
        <title>Proteogenomic analysis of Mycobacterium tuberculosis by high resolution mass spectrometry.</title>
        <authorList>
            <person name="Kelkar D.S."/>
            <person name="Kumar D."/>
            <person name="Kumar P."/>
            <person name="Balakrishnan L."/>
            <person name="Muthusamy B."/>
            <person name="Yadav A.K."/>
            <person name="Shrivastava P."/>
            <person name="Marimuthu A."/>
            <person name="Anand S."/>
            <person name="Sundaram H."/>
            <person name="Kingsbury R."/>
            <person name="Harsha H.C."/>
            <person name="Nair B."/>
            <person name="Prasad T.S."/>
            <person name="Chauhan D.S."/>
            <person name="Katoch K."/>
            <person name="Katoch V.M."/>
            <person name="Kumar P."/>
            <person name="Chaerkady R."/>
            <person name="Ramachandran S."/>
            <person name="Dash D."/>
            <person name="Pandey A."/>
        </authorList>
    </citation>
    <scope>ACETYLATION [LARGE SCALE ANALYSIS] AT MET-1</scope>
    <scope>IDENTIFICATION BY MASS SPECTROMETRY [LARGE SCALE ANALYSIS]</scope>
    <source>
        <strain>ATCC 25618 / H37Rv</strain>
    </source>
</reference>
<reference key="8">
    <citation type="journal article" date="2012" name="Microbiology">
        <title>The mycobacterial acyltransferase PapA5 is required for biosynthesis of cell wall-associated phenolic glycolipids.</title>
        <authorList>
            <person name="Chavadi S.S."/>
            <person name="Onwueme K.C."/>
            <person name="Edupuganti U.R."/>
            <person name="Jerome J."/>
            <person name="Chatterjee D."/>
            <person name="Soll C.E."/>
            <person name="Quadri L.E."/>
        </authorList>
    </citation>
    <scope>FUNCTION</scope>
    <scope>CATALYTIC ACTIVITY</scope>
</reference>
<reference key="9">
    <citation type="journal article" date="2015" name="Biochemistry">
        <title>Diacyltransferase activity and chain length specificity of Mycobacterium tuberculosis PapA5 in the synthesis of alkyl beta-diol lipids.</title>
        <authorList>
            <person name="Touchette M.H."/>
            <person name="Bommineni G.R."/>
            <person name="Delle Bovi R.J."/>
            <person name="Gadbery J.E."/>
            <person name="Nicora C.D."/>
            <person name="Shukla A.K."/>
            <person name="Kyle J.E."/>
            <person name="Metz T.O."/>
            <person name="Martin D.W."/>
            <person name="Sampson N.S."/>
            <person name="Miller W.T."/>
            <person name="Tonge P.J."/>
            <person name="Seeliger J.C."/>
        </authorList>
    </citation>
    <scope>CATALYTIC ACTIVITY</scope>
    <scope>PHOSPHORYLATION AT THR-198</scope>
</reference>
<reference key="10">
    <citation type="journal article" date="2004" name="J. Biol. Chem.">
        <title>Crystal structure of PapA5, a phthiocerol dimycocerosyl transferase from Mycobacterium tuberculosis.</title>
        <authorList>
            <person name="Buglino J."/>
            <person name="Onwueme K.C."/>
            <person name="Ferreras J.A."/>
            <person name="Quadri L.E.N."/>
            <person name="Lima C.D."/>
        </authorList>
    </citation>
    <scope>X-RAY CRYSTALLOGRAPHY (2.75 ANGSTROMS)</scope>
    <scope>SUBUNIT</scope>
    <scope>DOMAIN</scope>
    <scope>ACTIVE SITES</scope>
    <source>
        <strain>ATCC 35801 / TMC 107 / Erdman</strain>
    </source>
</reference>
<organism>
    <name type="scientific">Mycobacterium tuberculosis (strain ATCC 25618 / H37Rv)</name>
    <dbReference type="NCBI Taxonomy" id="83332"/>
    <lineage>
        <taxon>Bacteria</taxon>
        <taxon>Bacillati</taxon>
        <taxon>Actinomycetota</taxon>
        <taxon>Actinomycetes</taxon>
        <taxon>Mycobacteriales</taxon>
        <taxon>Mycobacteriaceae</taxon>
        <taxon>Mycobacterium</taxon>
        <taxon>Mycobacterium tuberculosis complex</taxon>
    </lineage>
</organism>
<comment type="function">
    <text evidence="1 3 5">Catalyzes diesterification of phthiocerol, phthiodiolone, and phenolphthiocerol with mycocerosic acids, the final step in the phthiocerol, phthiodiolone and phenolphthiocerol dimycocerosate esters (PDIM) synthesis. Can directly transfer the mycocerosate bound to the mycocerosic acid synthase (mas) onto the substrate alcohols. Is also able to catalyze acyl transfer using various nucleophiles as acceptors and several acyl-CoA thioesters as donors in vitro; preference is observed for saturated medium chain alcohols and long chain acyl-CoA thioesters.</text>
</comment>
<comment type="catalytic activity">
    <reaction evidence="5 6">
        <text>2 a mycocerosyl-[mycocerosic acid synthase] + a phthiocerol = a dimycocerosyl phthiocerol + 2 holo-[mycocerosic acid synthase].</text>
        <dbReference type="EC" id="2.3.1.282"/>
    </reaction>
</comment>
<comment type="catalytic activity">
    <reaction evidence="5 6">
        <text>2 a mycocerosyl-[mycocerosic acid synthase] + a phthiodiolone = a dimycocerosyl phthiodiolone + 2 holo-[mycocerosic acid synthase].</text>
        <dbReference type="EC" id="2.3.1.282"/>
    </reaction>
</comment>
<comment type="catalytic activity">
    <reaction evidence="5 6">
        <text>2 a mycocerosyl-[mycocerosic acid synthase] + a phenolphthiocerol = a dimycocerosyl phenolphthiocerol + 2 holo-[mycocerosic acid synthase].</text>
        <dbReference type="EC" id="2.3.1.282"/>
    </reaction>
</comment>
<comment type="catalytic activity">
    <reaction evidence="1">
        <text>octan-1-ol + hexadecanoyl-CoA = octyl hexadecanoyl + CoA</text>
        <dbReference type="Rhea" id="RHEA:44064"/>
        <dbReference type="ChEBI" id="CHEBI:16188"/>
        <dbReference type="ChEBI" id="CHEBI:57287"/>
        <dbReference type="ChEBI" id="CHEBI:57379"/>
        <dbReference type="ChEBI" id="CHEBI:84059"/>
    </reaction>
    <physiologicalReaction direction="left-to-right" evidence="1">
        <dbReference type="Rhea" id="RHEA:44065"/>
    </physiologicalReaction>
</comment>
<comment type="catalytic activity">
    <reaction evidence="1">
        <text>nonan-1-ol + hexadecanoyl-CoA = nonyl hexadecanoate + CoA</text>
        <dbReference type="Rhea" id="RHEA:44112"/>
        <dbReference type="ChEBI" id="CHEBI:35986"/>
        <dbReference type="ChEBI" id="CHEBI:57287"/>
        <dbReference type="ChEBI" id="CHEBI:57379"/>
        <dbReference type="ChEBI" id="CHEBI:84062"/>
    </reaction>
    <physiologicalReaction direction="left-to-right" evidence="1">
        <dbReference type="Rhea" id="RHEA:44113"/>
    </physiologicalReaction>
</comment>
<comment type="catalytic activity">
    <reaction evidence="1">
        <text>decan-1-ol + hexadecanoyl-CoA = decanyl hexadecanoate + CoA</text>
        <dbReference type="Rhea" id="RHEA:44096"/>
        <dbReference type="ChEBI" id="CHEBI:28903"/>
        <dbReference type="ChEBI" id="CHEBI:57287"/>
        <dbReference type="ChEBI" id="CHEBI:57379"/>
        <dbReference type="ChEBI" id="CHEBI:84063"/>
    </reaction>
    <physiologicalReaction direction="left-to-right" evidence="1">
        <dbReference type="Rhea" id="RHEA:44097"/>
    </physiologicalReaction>
</comment>
<comment type="catalytic activity">
    <reaction evidence="1">
        <text>tetradecan-1-ol + hexadecanoyl-CoA = tetradecanyl hexadecanoate + CoA</text>
        <dbReference type="Rhea" id="RHEA:44124"/>
        <dbReference type="ChEBI" id="CHEBI:57287"/>
        <dbReference type="ChEBI" id="CHEBI:57379"/>
        <dbReference type="ChEBI" id="CHEBI:77417"/>
        <dbReference type="ChEBI" id="CHEBI:84064"/>
    </reaction>
    <physiologicalReaction direction="left-to-right" evidence="1">
        <dbReference type="Rhea" id="RHEA:44125"/>
    </physiologicalReaction>
</comment>
<comment type="catalytic activity">
    <reaction evidence="1">
        <text>hexadecan-1-ol + hexadecanoyl-CoA = hexadecanyl hexadecanoate + CoA</text>
        <dbReference type="Rhea" id="RHEA:38167"/>
        <dbReference type="ChEBI" id="CHEBI:16125"/>
        <dbReference type="ChEBI" id="CHEBI:57287"/>
        <dbReference type="ChEBI" id="CHEBI:57379"/>
        <dbReference type="ChEBI" id="CHEBI:75584"/>
    </reaction>
    <physiologicalReaction direction="left-to-right" evidence="1">
        <dbReference type="Rhea" id="RHEA:38168"/>
    </physiologicalReaction>
</comment>
<comment type="catalytic activity">
    <reaction evidence="1">
        <text>octadecan-1-ol + hexadecanoyl-CoA = octadecanyl hexadecanoate + CoA</text>
        <dbReference type="Rhea" id="RHEA:44120"/>
        <dbReference type="ChEBI" id="CHEBI:32154"/>
        <dbReference type="ChEBI" id="CHEBI:57287"/>
        <dbReference type="ChEBI" id="CHEBI:57379"/>
        <dbReference type="ChEBI" id="CHEBI:84066"/>
    </reaction>
    <physiologicalReaction direction="left-to-right" evidence="1">
        <dbReference type="Rhea" id="RHEA:44121"/>
    </physiologicalReaction>
</comment>
<comment type="catalytic activity">
    <reaction evidence="1">
        <text>eicosan-1-ol + hexadecanoyl-CoA = eicosanyl hexadecanoate + CoA</text>
        <dbReference type="Rhea" id="RHEA:44116"/>
        <dbReference type="ChEBI" id="CHEBI:57287"/>
        <dbReference type="ChEBI" id="CHEBI:57379"/>
        <dbReference type="ChEBI" id="CHEBI:75627"/>
        <dbReference type="ChEBI" id="CHEBI:84065"/>
    </reaction>
    <physiologicalReaction direction="left-to-right" evidence="1">
        <dbReference type="Rhea" id="RHEA:44117"/>
    </physiologicalReaction>
</comment>
<comment type="catalytic activity">
    <reaction evidence="1">
        <text>(9E)-octadecenoyl-CoA + hexadecan-1-ol = hexadecanyl (9E)-octadecenoate + CoA</text>
        <dbReference type="Rhea" id="RHEA:44128"/>
        <dbReference type="ChEBI" id="CHEBI:16125"/>
        <dbReference type="ChEBI" id="CHEBI:57287"/>
        <dbReference type="ChEBI" id="CHEBI:77537"/>
        <dbReference type="ChEBI" id="CHEBI:84072"/>
    </reaction>
    <physiologicalReaction direction="left-to-right" evidence="1">
        <dbReference type="Rhea" id="RHEA:44129"/>
    </physiologicalReaction>
</comment>
<comment type="catalytic activity">
    <reaction evidence="1">
        <text>hexadecan-1-ol + (9Z)-octadecenoyl-CoA = hexadecanyl (9Z)-octadecenoate + CoA</text>
        <dbReference type="Rhea" id="RHEA:38227"/>
        <dbReference type="ChEBI" id="CHEBI:16125"/>
        <dbReference type="ChEBI" id="CHEBI:57287"/>
        <dbReference type="ChEBI" id="CHEBI:57387"/>
        <dbReference type="ChEBI" id="CHEBI:75622"/>
    </reaction>
    <physiologicalReaction direction="left-to-right" evidence="1">
        <dbReference type="Rhea" id="RHEA:38228"/>
    </physiologicalReaction>
</comment>
<comment type="catalytic activity">
    <reaction evidence="1">
        <text>hexadecan-1-ol + dodecanoyl-CoA = hexadecanyl dodecanoate + CoA</text>
        <dbReference type="Rhea" id="RHEA:44136"/>
        <dbReference type="ChEBI" id="CHEBI:16125"/>
        <dbReference type="ChEBI" id="CHEBI:57287"/>
        <dbReference type="ChEBI" id="CHEBI:57375"/>
        <dbReference type="ChEBI" id="CHEBI:84080"/>
    </reaction>
    <physiologicalReaction direction="left-to-right" evidence="1">
        <dbReference type="Rhea" id="RHEA:44137"/>
    </physiologicalReaction>
</comment>
<comment type="catalytic activity">
    <reaction evidence="1">
        <text>hexadecan-1-ol + octadecanoyl-CoA = hexadecanyl octadecanoate + CoA</text>
        <dbReference type="Rhea" id="RHEA:38251"/>
        <dbReference type="ChEBI" id="CHEBI:16125"/>
        <dbReference type="ChEBI" id="CHEBI:57287"/>
        <dbReference type="ChEBI" id="CHEBI:57394"/>
        <dbReference type="ChEBI" id="CHEBI:75631"/>
    </reaction>
    <physiologicalReaction direction="left-to-right" evidence="1">
        <dbReference type="Rhea" id="RHEA:38252"/>
    </physiologicalReaction>
</comment>
<comment type="biophysicochemical properties">
    <kinetics>
        <KM evidence="1">500 uM for 1-octanol</KM>
        <KM evidence="3">24 uM for 2-dodecanol</KM>
        <KM evidence="1">4 uM for palmitoyl-CoA</KM>
        <KM evidence="3">118 uM for lauroyl-CoA</KM>
        <KM evidence="3">0.39 uM for mycoserosate acylated to mas protein</KM>
    </kinetics>
    <phDependence>
        <text evidence="1">Optimum pH is 6.5.</text>
    </phDependence>
</comment>
<comment type="subunit">
    <text evidence="2 3 4">Monomer. Interacts directly with the acyl carrier protein (ACP) domain of the mycocerosic acid synthase (mas) protein. Interacts with FhaB.</text>
</comment>
<comment type="domain">
    <text evidence="2">Consists of two structural domains that are related to each other.</text>
</comment>
<comment type="PTM">
    <text evidence="4 6">Phosphorylated by PknB at Thr-198 (PubMed:19826007, PubMed:26271001). Dephosphorylated by PstP (PubMed:19826007).</text>
</comment>
<comment type="miscellaneous">
    <text>Was identified as a high-confidence drug target.</text>
</comment>
<comment type="similarity">
    <text evidence="7">Belongs to the acyltransferase PapA5 family.</text>
</comment>
<keyword id="KW-0002">3D-structure</keyword>
<keyword id="KW-0007">Acetylation</keyword>
<keyword id="KW-0012">Acyltransferase</keyword>
<keyword id="KW-0444">Lipid biosynthesis</keyword>
<keyword id="KW-0443">Lipid metabolism</keyword>
<keyword id="KW-0597">Phosphoprotein</keyword>
<keyword id="KW-1185">Reference proteome</keyword>
<keyword id="KW-0808">Transferase</keyword>
<proteinExistence type="evidence at protein level"/>
<dbReference type="EC" id="2.3.1.282" evidence="1 5 6"/>
<dbReference type="EMBL" id="AL123456">
    <property type="protein sequence ID" value="CCP45742.1"/>
    <property type="molecule type" value="Genomic_DNA"/>
</dbReference>
<dbReference type="PIR" id="G70984">
    <property type="entry name" value="G70984"/>
</dbReference>
<dbReference type="RefSeq" id="NP_217455.1">
    <property type="nucleotide sequence ID" value="NC_000962.3"/>
</dbReference>
<dbReference type="RefSeq" id="WP_003414853.1">
    <property type="nucleotide sequence ID" value="NZ_NVQJ01000015.1"/>
</dbReference>
<dbReference type="PDB" id="1Q9J">
    <property type="method" value="X-ray"/>
    <property type="resolution" value="2.75 A"/>
    <property type="chains" value="A/B=1-422"/>
</dbReference>
<dbReference type="PDBsum" id="1Q9J"/>
<dbReference type="SMR" id="P9WIN5"/>
<dbReference type="STRING" id="83332.Rv2939"/>
<dbReference type="SwissLipids" id="SLP:000001034"/>
<dbReference type="iPTMnet" id="P9WIN5"/>
<dbReference type="PaxDb" id="83332-Rv2939"/>
<dbReference type="DNASU" id="887327"/>
<dbReference type="GeneID" id="887327"/>
<dbReference type="KEGG" id="mtu:Rv2939"/>
<dbReference type="KEGG" id="mtv:RVBD_2939"/>
<dbReference type="TubercuList" id="Rv2939"/>
<dbReference type="eggNOG" id="COG1020">
    <property type="taxonomic scope" value="Bacteria"/>
</dbReference>
<dbReference type="InParanoid" id="P9WIN5"/>
<dbReference type="OrthoDB" id="3318646at2"/>
<dbReference type="BioCyc" id="MetaCyc:G185E-7192-MONOMER"/>
<dbReference type="BRENDA" id="2.3.1.282">
    <property type="organism ID" value="3445"/>
</dbReference>
<dbReference type="Reactome" id="R-MTU-9635470">
    <property type="pathway name" value="Dimycocersyl phthiocerol biosynthesis"/>
</dbReference>
<dbReference type="EvolutionaryTrace" id="P9WIN5"/>
<dbReference type="Proteomes" id="UP000001584">
    <property type="component" value="Chromosome"/>
</dbReference>
<dbReference type="GO" id="GO:0005829">
    <property type="term" value="C:cytosol"/>
    <property type="evidence" value="ECO:0000304"/>
    <property type="project" value="Reactome"/>
</dbReference>
<dbReference type="GO" id="GO:0016747">
    <property type="term" value="F:acyltransferase activity, transferring groups other than amino-acyl groups"/>
    <property type="evidence" value="ECO:0000314"/>
    <property type="project" value="MTBBASE"/>
</dbReference>
<dbReference type="GO" id="GO:0008374">
    <property type="term" value="F:O-acyltransferase activity"/>
    <property type="evidence" value="ECO:0000314"/>
    <property type="project" value="MTBBASE"/>
</dbReference>
<dbReference type="GO" id="GO:0016740">
    <property type="term" value="F:transferase activity"/>
    <property type="evidence" value="ECO:0000304"/>
    <property type="project" value="Reactome"/>
</dbReference>
<dbReference type="GO" id="GO:0071770">
    <property type="term" value="P:DIM/DIP cell wall layer assembly"/>
    <property type="evidence" value="ECO:0000314"/>
    <property type="project" value="MTBBASE"/>
</dbReference>
<dbReference type="GO" id="GO:0008610">
    <property type="term" value="P:lipid biosynthetic process"/>
    <property type="evidence" value="ECO:0000314"/>
    <property type="project" value="MTBBASE"/>
</dbReference>
<dbReference type="Gene3D" id="3.30.559.10">
    <property type="entry name" value="Chloramphenicol acetyltransferase-like domain"/>
    <property type="match status" value="1"/>
</dbReference>
<dbReference type="Gene3D" id="3.30.559.30">
    <property type="entry name" value="Nonribosomal peptide synthetase, condensation domain"/>
    <property type="match status" value="1"/>
</dbReference>
<dbReference type="InterPro" id="IPR023213">
    <property type="entry name" value="CAT-like_dom_sf"/>
</dbReference>
<dbReference type="InterPro" id="IPR031641">
    <property type="entry name" value="PapA_C"/>
</dbReference>
<dbReference type="NCBIfam" id="NF006788">
    <property type="entry name" value="PRK09294.1-2"/>
    <property type="match status" value="1"/>
</dbReference>
<dbReference type="Pfam" id="PF16911">
    <property type="entry name" value="PapA_C"/>
    <property type="match status" value="1"/>
</dbReference>
<dbReference type="SUPFAM" id="SSF52777">
    <property type="entry name" value="CoA-dependent acyltransferases"/>
    <property type="match status" value="2"/>
</dbReference>
<protein>
    <recommendedName>
        <fullName>Phthiocerol/phthiodiolone dimycocerosyl transferase</fullName>
        <ecNumber evidence="1 5 6">2.3.1.282</ecNumber>
    </recommendedName>
    <alternativeName>
        <fullName>Acyltransferase PapA5</fullName>
    </alternativeName>
    <alternativeName>
        <fullName>Phthiocerol/phthiodiolone O-acyltransferase</fullName>
    </alternativeName>
    <alternativeName>
        <fullName>Polyketide synthase-associated protein A5</fullName>
    </alternativeName>
</protein>
<accession>P9WIN5</accession>
<accession>L0TE04</accession>
<accession>P96208</accession>
<gene>
    <name type="primary">papA5</name>
    <name type="ordered locus">Rv2939</name>
    <name type="ORF">MTCY19H9.07</name>
</gene>
<sequence>MFPGSVIRKLSHSEEVFAQYEVFTSMTIQLRGVIDVDALSDAFDALLETHPVLASHLEQSSDGGWNLVADDLLHSGICVIDGTAATNGSPSGNAELRLDQSVSLLHLQLILREGGAELTLYLHHCMADGHHGAVLVDELFSRYTDAVTTGDPGPITPQPTPLSMEAVLAQRGIRKQGLSGAERFMSVMYAYEIPATETPAVLAHPGLPQAVPVTRLWLSKQQTSDLMAFGREHRLSLNAVVAAAILLTEWQLRNTPHVPIPYVYPVDLRFVLAPPVAPTEATNLLGAASYLAEIGPNTDIVDLASDIVATLRADLANGVIQQSGLHFGTAFEGTPPGLPPLVFCTDATSFPTMRTPPGLEIEDIKGQFYCSISVPLDLYSCAVYAGQLIIEHHGHIAEPGKSLEAIRSLLCTVPSEYGWIME</sequence>
<evidence type="ECO:0000269" key="1">
    <source>
    </source>
</evidence>
<evidence type="ECO:0000269" key="2">
    <source>
    </source>
</evidence>
<evidence type="ECO:0000269" key="3">
    <source>
    </source>
</evidence>
<evidence type="ECO:0000269" key="4">
    <source>
    </source>
</evidence>
<evidence type="ECO:0000269" key="5">
    <source>
    </source>
</evidence>
<evidence type="ECO:0000269" key="6">
    <source>
    </source>
</evidence>
<evidence type="ECO:0000305" key="7"/>
<evidence type="ECO:0007744" key="8">
    <source>
    </source>
</evidence>
<evidence type="ECO:0007829" key="9">
    <source>
        <dbReference type="PDB" id="1Q9J"/>
    </source>
</evidence>
<name>PAPA5_MYCTU</name>
<feature type="chain" id="PRO_0000058229" description="Phthiocerol/phthiodiolone dimycocerosyl transferase">
    <location>
        <begin position="1"/>
        <end position="422"/>
    </location>
</feature>
<feature type="active site" description="Proton acceptor" evidence="2">
    <location>
        <position position="124"/>
    </location>
</feature>
<feature type="site" description="Structural role in the organization of the active site">
    <location>
        <position position="128"/>
    </location>
</feature>
<feature type="site" description="Important for mas ACP domain recognition">
    <location>
        <position position="312"/>
    </location>
</feature>
<feature type="modified residue" description="N-acetylmethionine" evidence="8">
    <location>
        <position position="1"/>
    </location>
</feature>
<feature type="modified residue" description="Phosphothreonine" evidence="6">
    <location>
        <position position="198"/>
    </location>
</feature>
<feature type="mutagenesis site" description="About 2-fold decrease in activity." evidence="1">
    <original>H</original>
    <variation>A</variation>
    <location>
        <position position="123"/>
    </location>
</feature>
<feature type="mutagenesis site" description="76-fold decrease in activity." evidence="1">
    <original>H</original>
    <variation>A</variation>
    <location>
        <position position="124"/>
    </location>
</feature>
<feature type="mutagenesis site" description="65-fold decrease in activity." evidence="1">
    <original>D</original>
    <variation>A</variation>
    <location>
        <position position="128"/>
    </location>
</feature>
<feature type="mutagenesis site" description="Less than 1.9-fold decrease in activity." evidence="1">
    <original>Y</original>
    <variation>F</variation>
    <location>
        <position position="143"/>
    </location>
</feature>
<feature type="mutagenesis site" description="4-fold decrease in affinity for acylated mas protein. No change in catalytic activity." evidence="3">
    <original>R</original>
    <variation>E</variation>
    <location>
        <position position="234"/>
    </location>
</feature>
<feature type="mutagenesis site" description="40-fold decrease in affinity for acylated mas protein. No change in catalytic activity." evidence="3">
    <original>R</original>
    <variation>E</variation>
    <location>
        <position position="312"/>
    </location>
</feature>
<feature type="strand" evidence="9">
    <location>
        <begin position="5"/>
        <end position="9"/>
    </location>
</feature>
<feature type="helix" evidence="9">
    <location>
        <begin position="12"/>
        <end position="19"/>
    </location>
</feature>
<feature type="strand" evidence="9">
    <location>
        <begin position="23"/>
        <end position="32"/>
    </location>
</feature>
<feature type="helix" evidence="9">
    <location>
        <begin position="36"/>
        <end position="49"/>
    </location>
</feature>
<feature type="helix" evidence="9">
    <location>
        <begin position="51"/>
        <end position="53"/>
    </location>
</feature>
<feature type="strand" evidence="9">
    <location>
        <begin position="54"/>
        <end position="59"/>
    </location>
</feature>
<feature type="strand" evidence="9">
    <location>
        <begin position="63"/>
        <end position="69"/>
    </location>
</feature>
<feature type="strand" evidence="9">
    <location>
        <begin position="72"/>
        <end position="74"/>
    </location>
</feature>
<feature type="strand" evidence="9">
    <location>
        <begin position="78"/>
        <end position="80"/>
    </location>
</feature>
<feature type="turn" evidence="9">
    <location>
        <begin position="100"/>
        <end position="102"/>
    </location>
</feature>
<feature type="strand" evidence="9">
    <location>
        <begin position="104"/>
        <end position="110"/>
    </location>
</feature>
<feature type="strand" evidence="9">
    <location>
        <begin position="113"/>
        <end position="115"/>
    </location>
</feature>
<feature type="strand" evidence="9">
    <location>
        <begin position="117"/>
        <end position="123"/>
    </location>
</feature>
<feature type="helix" evidence="9">
    <location>
        <begin position="124"/>
        <end position="126"/>
    </location>
</feature>
<feature type="helix" evidence="9">
    <location>
        <begin position="129"/>
        <end position="148"/>
    </location>
</feature>
<feature type="strand" evidence="9">
    <location>
        <begin position="149"/>
        <end position="151"/>
    </location>
</feature>
<feature type="helix" evidence="9">
    <location>
        <begin position="164"/>
        <end position="170"/>
    </location>
</feature>
<feature type="turn" evidence="9">
    <location>
        <begin position="186"/>
        <end position="189"/>
    </location>
</feature>
<feature type="strand" evidence="9">
    <location>
        <begin position="213"/>
        <end position="216"/>
    </location>
</feature>
<feature type="helix" evidence="9">
    <location>
        <begin position="220"/>
        <end position="230"/>
    </location>
</feature>
<feature type="turn" evidence="9">
    <location>
        <begin position="231"/>
        <end position="234"/>
    </location>
</feature>
<feature type="helix" evidence="9">
    <location>
        <begin position="237"/>
        <end position="253"/>
    </location>
</feature>
<feature type="strand" evidence="9">
    <location>
        <begin position="260"/>
        <end position="267"/>
    </location>
</feature>
<feature type="turn" evidence="9">
    <location>
        <begin position="268"/>
        <end position="271"/>
    </location>
</feature>
<feature type="strand" evidence="9">
    <location>
        <begin position="272"/>
        <end position="274"/>
    </location>
</feature>
<feature type="turn" evidence="9">
    <location>
        <begin position="278"/>
        <end position="280"/>
    </location>
</feature>
<feature type="strand" evidence="9">
    <location>
        <begin position="285"/>
        <end position="292"/>
    </location>
</feature>
<feature type="helix" evidence="9">
    <location>
        <begin position="300"/>
        <end position="317"/>
    </location>
</feature>
<feature type="helix" evidence="9">
    <location>
        <begin position="319"/>
        <end position="322"/>
    </location>
</feature>
<feature type="helix" evidence="9">
    <location>
        <begin position="327"/>
        <end position="332"/>
    </location>
</feature>
<feature type="strand" evidence="9">
    <location>
        <begin position="336"/>
        <end position="338"/>
    </location>
</feature>
<feature type="strand" evidence="9">
    <location>
        <begin position="342"/>
        <end position="345"/>
    </location>
</feature>
<feature type="strand" evidence="9">
    <location>
        <begin position="360"/>
        <end position="368"/>
    </location>
</feature>
<feature type="strand" evidence="9">
    <location>
        <begin position="371"/>
        <end position="373"/>
    </location>
</feature>
<feature type="strand" evidence="9">
    <location>
        <begin position="378"/>
        <end position="384"/>
    </location>
</feature>
<feature type="strand" evidence="9">
    <location>
        <begin position="387"/>
        <end position="395"/>
    </location>
</feature>
<feature type="helix" evidence="9">
    <location>
        <begin position="399"/>
        <end position="412"/>
    </location>
</feature>
<feature type="turn" evidence="9">
    <location>
        <begin position="413"/>
        <end position="415"/>
    </location>
</feature>